<gene>
    <name evidence="1" type="primary">murD</name>
    <name type="ordered locus">Lxx15280</name>
</gene>
<accession>Q6AE62</accession>
<evidence type="ECO:0000255" key="1">
    <source>
        <dbReference type="HAMAP-Rule" id="MF_00639"/>
    </source>
</evidence>
<name>MURD_LEIXX</name>
<organism>
    <name type="scientific">Leifsonia xyli subsp. xyli (strain CTCB07)</name>
    <dbReference type="NCBI Taxonomy" id="281090"/>
    <lineage>
        <taxon>Bacteria</taxon>
        <taxon>Bacillati</taxon>
        <taxon>Actinomycetota</taxon>
        <taxon>Actinomycetes</taxon>
        <taxon>Micrococcales</taxon>
        <taxon>Microbacteriaceae</taxon>
        <taxon>Leifsonia</taxon>
    </lineage>
</organism>
<keyword id="KW-0067">ATP-binding</keyword>
<keyword id="KW-0131">Cell cycle</keyword>
<keyword id="KW-0132">Cell division</keyword>
<keyword id="KW-0133">Cell shape</keyword>
<keyword id="KW-0961">Cell wall biogenesis/degradation</keyword>
<keyword id="KW-0963">Cytoplasm</keyword>
<keyword id="KW-0436">Ligase</keyword>
<keyword id="KW-0547">Nucleotide-binding</keyword>
<keyword id="KW-0573">Peptidoglycan synthesis</keyword>
<keyword id="KW-1185">Reference proteome</keyword>
<reference key="1">
    <citation type="journal article" date="2004" name="Mol. Plant Microbe Interact.">
        <title>The genome sequence of the Gram-positive sugarcane pathogen Leifsonia xyli subsp. xyli.</title>
        <authorList>
            <person name="Monteiro-Vitorello C.B."/>
            <person name="Camargo L.E.A."/>
            <person name="Van Sluys M.A."/>
            <person name="Kitajima J.P."/>
            <person name="Truffi D."/>
            <person name="do Amaral A.M."/>
            <person name="Harakava R."/>
            <person name="de Oliveira J.C.F."/>
            <person name="Wood D."/>
            <person name="de Oliveira M.C."/>
            <person name="Miyaki C.Y."/>
            <person name="Takita M.A."/>
            <person name="da Silva A.C.R."/>
            <person name="Furlan L.R."/>
            <person name="Carraro D.M."/>
            <person name="Camarotte G."/>
            <person name="Almeida N.F. Jr."/>
            <person name="Carrer H."/>
            <person name="Coutinho L.L."/>
            <person name="El-Dorry H.A."/>
            <person name="Ferro M.I.T."/>
            <person name="Gagliardi P.R."/>
            <person name="Giglioti E."/>
            <person name="Goldman M.H.S."/>
            <person name="Goldman G.H."/>
            <person name="Kimura E.T."/>
            <person name="Ferro E.S."/>
            <person name="Kuramae E.E."/>
            <person name="Lemos E.G.M."/>
            <person name="Lemos M.V.F."/>
            <person name="Mauro S.M.Z."/>
            <person name="Machado M.A."/>
            <person name="Marino C.L."/>
            <person name="Menck C.F."/>
            <person name="Nunes L.R."/>
            <person name="Oliveira R.C."/>
            <person name="Pereira G.G."/>
            <person name="Siqueira W."/>
            <person name="de Souza A.A."/>
            <person name="Tsai S.M."/>
            <person name="Zanca A.S."/>
            <person name="Simpson A.J.G."/>
            <person name="Brumbley S.M."/>
            <person name="Setubal J.C."/>
        </authorList>
    </citation>
    <scope>NUCLEOTIDE SEQUENCE [LARGE SCALE GENOMIC DNA]</scope>
    <source>
        <strain>CTCB07</strain>
    </source>
</reference>
<proteinExistence type="inferred from homology"/>
<dbReference type="EC" id="6.3.2.9" evidence="1"/>
<dbReference type="EMBL" id="AE016822">
    <property type="protein sequence ID" value="AAT89334.1"/>
    <property type="molecule type" value="Genomic_DNA"/>
</dbReference>
<dbReference type="RefSeq" id="WP_011186324.1">
    <property type="nucleotide sequence ID" value="NC_006087.1"/>
</dbReference>
<dbReference type="SMR" id="Q6AE62"/>
<dbReference type="STRING" id="281090.Lxx15280"/>
<dbReference type="KEGG" id="lxx:Lxx15280"/>
<dbReference type="eggNOG" id="COG0771">
    <property type="taxonomic scope" value="Bacteria"/>
</dbReference>
<dbReference type="HOGENOM" id="CLU_032540_0_0_11"/>
<dbReference type="UniPathway" id="UPA00219"/>
<dbReference type="Proteomes" id="UP000001306">
    <property type="component" value="Chromosome"/>
</dbReference>
<dbReference type="GO" id="GO:0005737">
    <property type="term" value="C:cytoplasm"/>
    <property type="evidence" value="ECO:0007669"/>
    <property type="project" value="UniProtKB-SubCell"/>
</dbReference>
<dbReference type="GO" id="GO:0005524">
    <property type="term" value="F:ATP binding"/>
    <property type="evidence" value="ECO:0007669"/>
    <property type="project" value="UniProtKB-UniRule"/>
</dbReference>
<dbReference type="GO" id="GO:0004326">
    <property type="term" value="F:tetrahydrofolylpolyglutamate synthase activity"/>
    <property type="evidence" value="ECO:0007669"/>
    <property type="project" value="InterPro"/>
</dbReference>
<dbReference type="GO" id="GO:0008764">
    <property type="term" value="F:UDP-N-acetylmuramoylalanine-D-glutamate ligase activity"/>
    <property type="evidence" value="ECO:0007669"/>
    <property type="project" value="UniProtKB-UniRule"/>
</dbReference>
<dbReference type="GO" id="GO:0051301">
    <property type="term" value="P:cell division"/>
    <property type="evidence" value="ECO:0007669"/>
    <property type="project" value="UniProtKB-KW"/>
</dbReference>
<dbReference type="GO" id="GO:0071555">
    <property type="term" value="P:cell wall organization"/>
    <property type="evidence" value="ECO:0007669"/>
    <property type="project" value="UniProtKB-KW"/>
</dbReference>
<dbReference type="GO" id="GO:0009252">
    <property type="term" value="P:peptidoglycan biosynthetic process"/>
    <property type="evidence" value="ECO:0007669"/>
    <property type="project" value="UniProtKB-UniRule"/>
</dbReference>
<dbReference type="GO" id="GO:0008360">
    <property type="term" value="P:regulation of cell shape"/>
    <property type="evidence" value="ECO:0007669"/>
    <property type="project" value="UniProtKB-KW"/>
</dbReference>
<dbReference type="Gene3D" id="3.90.190.20">
    <property type="entry name" value="Mur ligase, C-terminal domain"/>
    <property type="match status" value="1"/>
</dbReference>
<dbReference type="Gene3D" id="3.40.1190.10">
    <property type="entry name" value="Mur-like, catalytic domain"/>
    <property type="match status" value="1"/>
</dbReference>
<dbReference type="Gene3D" id="3.40.50.720">
    <property type="entry name" value="NAD(P)-binding Rossmann-like Domain"/>
    <property type="match status" value="1"/>
</dbReference>
<dbReference type="HAMAP" id="MF_00639">
    <property type="entry name" value="MurD"/>
    <property type="match status" value="1"/>
</dbReference>
<dbReference type="InterPro" id="IPR018109">
    <property type="entry name" value="Folylpolyglutamate_synth_CS"/>
</dbReference>
<dbReference type="InterPro" id="IPR036565">
    <property type="entry name" value="Mur-like_cat_sf"/>
</dbReference>
<dbReference type="InterPro" id="IPR004101">
    <property type="entry name" value="Mur_ligase_C"/>
</dbReference>
<dbReference type="InterPro" id="IPR036615">
    <property type="entry name" value="Mur_ligase_C_dom_sf"/>
</dbReference>
<dbReference type="InterPro" id="IPR013221">
    <property type="entry name" value="Mur_ligase_cen"/>
</dbReference>
<dbReference type="InterPro" id="IPR005762">
    <property type="entry name" value="MurD"/>
</dbReference>
<dbReference type="NCBIfam" id="TIGR01087">
    <property type="entry name" value="murD"/>
    <property type="match status" value="1"/>
</dbReference>
<dbReference type="PANTHER" id="PTHR43692">
    <property type="entry name" value="UDP-N-ACETYLMURAMOYLALANINE--D-GLUTAMATE LIGASE"/>
    <property type="match status" value="1"/>
</dbReference>
<dbReference type="PANTHER" id="PTHR43692:SF1">
    <property type="entry name" value="UDP-N-ACETYLMURAMOYLALANINE--D-GLUTAMATE LIGASE"/>
    <property type="match status" value="1"/>
</dbReference>
<dbReference type="Pfam" id="PF02875">
    <property type="entry name" value="Mur_ligase_C"/>
    <property type="match status" value="1"/>
</dbReference>
<dbReference type="Pfam" id="PF08245">
    <property type="entry name" value="Mur_ligase_M"/>
    <property type="match status" value="1"/>
</dbReference>
<dbReference type="Pfam" id="PF21799">
    <property type="entry name" value="MurD-like_N"/>
    <property type="match status" value="1"/>
</dbReference>
<dbReference type="SUPFAM" id="SSF51984">
    <property type="entry name" value="MurCD N-terminal domain"/>
    <property type="match status" value="1"/>
</dbReference>
<dbReference type="SUPFAM" id="SSF53623">
    <property type="entry name" value="MurD-like peptide ligases, catalytic domain"/>
    <property type="match status" value="1"/>
</dbReference>
<dbReference type="SUPFAM" id="SSF53244">
    <property type="entry name" value="MurD-like peptide ligases, peptide-binding domain"/>
    <property type="match status" value="1"/>
</dbReference>
<sequence length="517" mass="54757">MTASEERLAALTSWHADWSGLRVVVYGLGVTGFSVADTLAELGASVLVVASRADHERAMLLDVIGAELLLQADLSAPPERLTAFGPELIVVSPGFHADHPLLLWADQQGIPVWGDIELAWRLRDKTAPPGSGNSPADWICVTGTNGKTTTVQLTATMLLAGGSRVAPCGNIGVAVLDAIRDPQGFDVLVVELSSYQLHWINRNAGGEVSPYAAACLNIADDHLDWHGSLEAYAAAKAKVYENAQVACVYNRADEATLRMVEETEVVEGARAIGFGLDVPGPSDFGIVDGILCDRAFLDDRLHSAIELTTLEELREAGLAAPHIVANILAASALARAYGVEPWVVRDVLSAFRLDAHRIELVRIEAGVSWVDDSKATNPHAADASLRAYPSVVWVVGGLFKGVDLDGLVKRHAARLRGAVLIGADRDLLRSAFQRHAPGLPVVEVDADETEHVMPTAVRLAAALVRDGDTVLLAPAAASMDQFSDYAERGRLFQAAVNEYLGGGADDGSSASRPGSGG</sequence>
<comment type="function">
    <text evidence="1">Cell wall formation. Catalyzes the addition of glutamate to the nucleotide precursor UDP-N-acetylmuramoyl-L-alanine (UMA).</text>
</comment>
<comment type="catalytic activity">
    <reaction evidence="1">
        <text>UDP-N-acetyl-alpha-D-muramoyl-L-alanine + D-glutamate + ATP = UDP-N-acetyl-alpha-D-muramoyl-L-alanyl-D-glutamate + ADP + phosphate + H(+)</text>
        <dbReference type="Rhea" id="RHEA:16429"/>
        <dbReference type="ChEBI" id="CHEBI:15378"/>
        <dbReference type="ChEBI" id="CHEBI:29986"/>
        <dbReference type="ChEBI" id="CHEBI:30616"/>
        <dbReference type="ChEBI" id="CHEBI:43474"/>
        <dbReference type="ChEBI" id="CHEBI:83898"/>
        <dbReference type="ChEBI" id="CHEBI:83900"/>
        <dbReference type="ChEBI" id="CHEBI:456216"/>
        <dbReference type="EC" id="6.3.2.9"/>
    </reaction>
</comment>
<comment type="pathway">
    <text evidence="1">Cell wall biogenesis; peptidoglycan biosynthesis.</text>
</comment>
<comment type="subcellular location">
    <subcellularLocation>
        <location evidence="1">Cytoplasm</location>
    </subcellularLocation>
</comment>
<comment type="similarity">
    <text evidence="1">Belongs to the MurCDEF family.</text>
</comment>
<protein>
    <recommendedName>
        <fullName evidence="1">UDP-N-acetylmuramoylalanine--D-glutamate ligase</fullName>
        <ecNumber evidence="1">6.3.2.9</ecNumber>
    </recommendedName>
    <alternativeName>
        <fullName evidence="1">D-glutamic acid-adding enzyme</fullName>
    </alternativeName>
    <alternativeName>
        <fullName evidence="1">UDP-N-acetylmuramoyl-L-alanyl-D-glutamate synthetase</fullName>
    </alternativeName>
</protein>
<feature type="chain" id="PRO_0000109035" description="UDP-N-acetylmuramoylalanine--D-glutamate ligase">
    <location>
        <begin position="1"/>
        <end position="517"/>
    </location>
</feature>
<feature type="binding site" evidence="1">
    <location>
        <begin position="143"/>
        <end position="149"/>
    </location>
    <ligand>
        <name>ATP</name>
        <dbReference type="ChEBI" id="CHEBI:30616"/>
    </ligand>
</feature>